<protein>
    <recommendedName>
        <fullName evidence="1">Enoyl-[acyl-carrier-protein] reductase [NADH]</fullName>
        <shortName evidence="1">ENR</shortName>
        <ecNumber evidence="1">1.3.1.9</ecNumber>
    </recommendedName>
</protein>
<feature type="chain" id="PRO_1000188374" description="Enoyl-[acyl-carrier-protein] reductase [NADH]">
    <location>
        <begin position="1"/>
        <end position="399"/>
    </location>
</feature>
<feature type="active site" description="Proton donor" evidence="1">
    <location>
        <position position="235"/>
    </location>
</feature>
<feature type="binding site" evidence="1">
    <location>
        <begin position="48"/>
        <end position="53"/>
    </location>
    <ligand>
        <name>NAD(+)</name>
        <dbReference type="ChEBI" id="CHEBI:57540"/>
    </ligand>
</feature>
<feature type="binding site" evidence="1">
    <location>
        <begin position="74"/>
        <end position="75"/>
    </location>
    <ligand>
        <name>NAD(+)</name>
        <dbReference type="ChEBI" id="CHEBI:57540"/>
    </ligand>
</feature>
<feature type="binding site" evidence="1">
    <location>
        <begin position="111"/>
        <end position="112"/>
    </location>
    <ligand>
        <name>NAD(+)</name>
        <dbReference type="ChEBI" id="CHEBI:57540"/>
    </ligand>
</feature>
<feature type="binding site" evidence="1">
    <location>
        <begin position="139"/>
        <end position="140"/>
    </location>
    <ligand>
        <name>NAD(+)</name>
        <dbReference type="ChEBI" id="CHEBI:57540"/>
    </ligand>
</feature>
<feature type="binding site" evidence="1">
    <location>
        <position position="225"/>
    </location>
    <ligand>
        <name>substrate</name>
    </ligand>
</feature>
<feature type="binding site" evidence="1">
    <location>
        <position position="244"/>
    </location>
    <ligand>
        <name>NAD(+)</name>
        <dbReference type="ChEBI" id="CHEBI:57540"/>
    </ligand>
</feature>
<feature type="binding site" evidence="1">
    <location>
        <begin position="274"/>
        <end position="276"/>
    </location>
    <ligand>
        <name>NAD(+)</name>
        <dbReference type="ChEBI" id="CHEBI:57540"/>
    </ligand>
</feature>
<feature type="site" description="Plays an important role in discriminating NADH against NADPH" evidence="1">
    <location>
        <position position="75"/>
    </location>
</feature>
<name>FABV_YERPG</name>
<organism>
    <name type="scientific">Yersinia pestis bv. Antiqua (strain Angola)</name>
    <dbReference type="NCBI Taxonomy" id="349746"/>
    <lineage>
        <taxon>Bacteria</taxon>
        <taxon>Pseudomonadati</taxon>
        <taxon>Pseudomonadota</taxon>
        <taxon>Gammaproteobacteria</taxon>
        <taxon>Enterobacterales</taxon>
        <taxon>Yersiniaceae</taxon>
        <taxon>Yersinia</taxon>
    </lineage>
</organism>
<accession>A9R5S2</accession>
<reference key="1">
    <citation type="journal article" date="2010" name="J. Bacteriol.">
        <title>Genome sequence of the deep-rooted Yersinia pestis strain Angola reveals new insights into the evolution and pangenome of the plague bacterium.</title>
        <authorList>
            <person name="Eppinger M."/>
            <person name="Worsham P.L."/>
            <person name="Nikolich M.P."/>
            <person name="Riley D.R."/>
            <person name="Sebastian Y."/>
            <person name="Mou S."/>
            <person name="Achtman M."/>
            <person name="Lindler L.E."/>
            <person name="Ravel J."/>
        </authorList>
    </citation>
    <scope>NUCLEOTIDE SEQUENCE [LARGE SCALE GENOMIC DNA]</scope>
    <source>
        <strain>Angola</strain>
    </source>
</reference>
<gene>
    <name evidence="1" type="primary">fabV</name>
    <name type="ordered locus">YpAngola_A4184</name>
</gene>
<keyword id="KW-0275">Fatty acid biosynthesis</keyword>
<keyword id="KW-0276">Fatty acid metabolism</keyword>
<keyword id="KW-0444">Lipid biosynthesis</keyword>
<keyword id="KW-0443">Lipid metabolism</keyword>
<keyword id="KW-0520">NAD</keyword>
<keyword id="KW-0560">Oxidoreductase</keyword>
<comment type="function">
    <text evidence="1">Involved in the final reduction of the elongation cycle of fatty acid synthesis (FAS II). Catalyzes the reduction of a carbon-carbon double bond in an enoyl moiety that is covalently linked to an acyl carrier protein (ACP).</text>
</comment>
<comment type="catalytic activity">
    <reaction evidence="1">
        <text>a 2,3-saturated acyl-[ACP] + NAD(+) = a (2E)-enoyl-[ACP] + NADH + H(+)</text>
        <dbReference type="Rhea" id="RHEA:10240"/>
        <dbReference type="Rhea" id="RHEA-COMP:9925"/>
        <dbReference type="Rhea" id="RHEA-COMP:9926"/>
        <dbReference type="ChEBI" id="CHEBI:15378"/>
        <dbReference type="ChEBI" id="CHEBI:57540"/>
        <dbReference type="ChEBI" id="CHEBI:57945"/>
        <dbReference type="ChEBI" id="CHEBI:78784"/>
        <dbReference type="ChEBI" id="CHEBI:78785"/>
        <dbReference type="EC" id="1.3.1.9"/>
    </reaction>
</comment>
<comment type="pathway">
    <text evidence="1">Lipid metabolism; fatty acid biosynthesis.</text>
</comment>
<comment type="subunit">
    <text evidence="1">Monomer.</text>
</comment>
<comment type="similarity">
    <text evidence="1">Belongs to the TER reductase family.</text>
</comment>
<dbReference type="EC" id="1.3.1.9" evidence="1"/>
<dbReference type="EMBL" id="CP000901">
    <property type="protein sequence ID" value="ABX86778.1"/>
    <property type="molecule type" value="Genomic_DNA"/>
</dbReference>
<dbReference type="RefSeq" id="WP_002215588.1">
    <property type="nucleotide sequence ID" value="NZ_CP009935.1"/>
</dbReference>
<dbReference type="SMR" id="A9R5S2"/>
<dbReference type="GeneID" id="57974620"/>
<dbReference type="KEGG" id="ypg:YpAngola_A4184"/>
<dbReference type="PATRIC" id="fig|349746.12.peg.920"/>
<dbReference type="UniPathway" id="UPA00094"/>
<dbReference type="GO" id="GO:0004318">
    <property type="term" value="F:enoyl-[acyl-carrier-protein] reductase (NADH) activity"/>
    <property type="evidence" value="ECO:0007669"/>
    <property type="project" value="UniProtKB-UniRule"/>
</dbReference>
<dbReference type="GO" id="GO:0051287">
    <property type="term" value="F:NAD binding"/>
    <property type="evidence" value="ECO:0007669"/>
    <property type="project" value="UniProtKB-UniRule"/>
</dbReference>
<dbReference type="GO" id="GO:0050343">
    <property type="term" value="F:trans-2-enoyl-CoA reductase (NADH) activity"/>
    <property type="evidence" value="ECO:0007669"/>
    <property type="project" value="TreeGrafter"/>
</dbReference>
<dbReference type="GO" id="GO:0006633">
    <property type="term" value="P:fatty acid biosynthetic process"/>
    <property type="evidence" value="ECO:0007669"/>
    <property type="project" value="UniProtKB-UniRule"/>
</dbReference>
<dbReference type="FunFam" id="3.40.50.720:FF:000221">
    <property type="entry name" value="Enoyl-[acyl-carrier-protein] reductase [NADH]"/>
    <property type="match status" value="1"/>
</dbReference>
<dbReference type="Gene3D" id="3.40.50.720">
    <property type="entry name" value="NAD(P)-binding Rossmann-like Domain"/>
    <property type="match status" value="1"/>
</dbReference>
<dbReference type="HAMAP" id="MF_01838">
    <property type="entry name" value="FabV_reductase"/>
    <property type="match status" value="1"/>
</dbReference>
<dbReference type="InterPro" id="IPR024906">
    <property type="entry name" value="Eno_Rdtase_FAD-bd_dom"/>
</dbReference>
<dbReference type="InterPro" id="IPR024910">
    <property type="entry name" value="Enoyl-CoA_Rdtase_cat_dom"/>
</dbReference>
<dbReference type="InterPro" id="IPR050048">
    <property type="entry name" value="FabV-like_NADH_b"/>
</dbReference>
<dbReference type="InterPro" id="IPR010758">
    <property type="entry name" value="Trans-2-enoyl-CoA_reductase"/>
</dbReference>
<dbReference type="NCBIfam" id="NF043048">
    <property type="entry name" value="EnoyACPredFabV"/>
    <property type="match status" value="1"/>
</dbReference>
<dbReference type="NCBIfam" id="NF010177">
    <property type="entry name" value="PRK13656.1"/>
    <property type="match status" value="1"/>
</dbReference>
<dbReference type="PANTHER" id="PTHR37480">
    <property type="entry name" value="ENOYL-[ACYL-CARRIER-PROTEIN] REDUCTASE [NADH]"/>
    <property type="match status" value="1"/>
</dbReference>
<dbReference type="PANTHER" id="PTHR37480:SF1">
    <property type="entry name" value="ENOYL-[ACYL-CARRIER-PROTEIN] REDUCTASE [NADH]"/>
    <property type="match status" value="1"/>
</dbReference>
<dbReference type="Pfam" id="PF07055">
    <property type="entry name" value="Eno-Rase_FAD_bd"/>
    <property type="match status" value="1"/>
</dbReference>
<dbReference type="Pfam" id="PF12242">
    <property type="entry name" value="Eno-Rase_NADH_b"/>
    <property type="match status" value="1"/>
</dbReference>
<dbReference type="Pfam" id="PF12241">
    <property type="entry name" value="Enoyl_reductase"/>
    <property type="match status" value="1"/>
</dbReference>
<proteinExistence type="inferred from homology"/>
<evidence type="ECO:0000255" key="1">
    <source>
        <dbReference type="HAMAP-Rule" id="MF_01838"/>
    </source>
</evidence>
<sequence>MIIKPRVRGFICVTAHPTGCEANVKKQIDYVTTEGPIANGPKRVLVIGASTGYGLAARITAAFGCGADTLGVFFERPGEEGKPGTSGWYNSAAFHKFAAQKGLYAKSINGDAFSDEIKQLTIDAIKQDLGQVDQVIYSLASPRRTHPKTGEVFNSALKPIGNAVNLRGLDTDKEVIKESVLQPATQSEIDSTVAVMGGEDWQMWIDALLDAGVLAEGAQTTAFTYLGEKITHDIYWNGSIGAAKKDLDQKVLAIRESLAAHGGGDARVSVLKAVVTQASSAIPMMPLYLSLLFKVMKEKGTHEGCIEQVYSLYKDSLCGDSPHMDQEGRLRADYKELDPEVQNQVQQLWDQVTNDNIYQLTDFVGYKSEFLNLFGFGIDGVDYDADVNPDVKIPNLIQG</sequence>